<feature type="initiator methionine" description="Removed" evidence="6 7">
    <location>
        <position position="1"/>
    </location>
</feature>
<feature type="chain" id="PRO_0000186149" description="Troponin I, cardiac muscle">
    <location>
        <begin position="2"/>
        <end position="212"/>
    </location>
</feature>
<feature type="region of interest" description="Disordered" evidence="5">
    <location>
        <begin position="1"/>
        <end position="45"/>
    </location>
</feature>
<feature type="region of interest" description="Involved in binding TNC">
    <location>
        <begin position="34"/>
        <end position="81"/>
    </location>
</feature>
<feature type="region of interest" description="Involved in binding TNC and actin">
    <location>
        <begin position="131"/>
        <end position="151"/>
    </location>
</feature>
<feature type="compositionally biased region" description="Polar residues" evidence="5">
    <location>
        <begin position="1"/>
        <end position="11"/>
    </location>
</feature>
<feature type="site" description="Involved in TNI-TNT interactions">
    <location>
        <position position="82"/>
    </location>
</feature>
<feature type="site" description="Involved in TNI-TNT interactions">
    <location>
        <position position="99"/>
    </location>
</feature>
<feature type="modified residue" description="N-acetylalanine" evidence="7">
    <location>
        <position position="2"/>
    </location>
</feature>
<feature type="modified residue" description="Phosphoserine" evidence="3">
    <location>
        <position position="5"/>
    </location>
</feature>
<feature type="modified residue" description="Phosphoserine; by PKA and PKD/PRKD1" evidence="2">
    <location>
        <position position="24"/>
    </location>
</feature>
<feature type="modified residue" description="Phosphoserine; by PKA and PKD/PRKD1" evidence="3">
    <location>
        <position position="25"/>
    </location>
</feature>
<feature type="modified residue" description="Phosphotyrosine" evidence="3">
    <location>
        <position position="28"/>
    </location>
</feature>
<feature type="modified residue" description="Phosphothreonine; by STK4/MST1" evidence="3">
    <location>
        <position position="33"/>
    </location>
</feature>
<feature type="modified residue" description="Phosphoserine; by PKC/PRKCE" evidence="4">
    <location>
        <position position="44"/>
    </location>
</feature>
<feature type="modified residue" description="Phosphoserine; by PKC/PRKCE" evidence="4">
    <location>
        <position position="46"/>
    </location>
</feature>
<feature type="modified residue" description="Phosphothreonine; by STK4/MST1" evidence="3">
    <location>
        <position position="53"/>
    </location>
</feature>
<feature type="modified residue" description="Phosphoserine" evidence="3">
    <location>
        <position position="79"/>
    </location>
</feature>
<feature type="modified residue" description="Phosphothreonine" evidence="3">
    <location>
        <position position="80"/>
    </location>
</feature>
<feature type="modified residue" description="Phosphothreonine; by STK4/MST1" evidence="3">
    <location>
        <position position="145"/>
    </location>
</feature>
<feature type="modified residue" description="Phosphoserine; by PAK3" evidence="3">
    <location>
        <position position="152"/>
    </location>
</feature>
<feature type="modified residue" description="Phosphothreonine" evidence="3">
    <location>
        <position position="183"/>
    </location>
</feature>
<feature type="modified residue" description="Phosphoserine" evidence="3">
    <location>
        <position position="201"/>
    </location>
</feature>
<feature type="sequence conflict" description="In Ref. 3; AA sequence." evidence="8" ref="3">
    <original>P</original>
    <variation>M</variation>
    <location>
        <position position="17"/>
    </location>
</feature>
<accession>P08057</accession>
<accession>Q5ZG22</accession>
<proteinExistence type="evidence at protein level"/>
<sequence>MADRSGGSTAGDTVPAPPPVRRRSSANYRAYATEPHAKKKSKISASRKLQLKTLMLQIAKQELEREAEERRGEKGRALSTRCQPLELAGLGFAELQDLCRQLHARVDKVDEERYDVEAKVTKNITEIADLNQKIFDLRGKFKRPTLRRVRISADAMMQALLGARAKETLDLRAHLKQVKKEDTEKENREVGDWRKNIDALSGMEGRKKKFEG</sequence>
<evidence type="ECO:0000250" key="1"/>
<evidence type="ECO:0000250" key="2">
    <source>
        <dbReference type="UniProtKB" id="P02646"/>
    </source>
</evidence>
<evidence type="ECO:0000250" key="3">
    <source>
        <dbReference type="UniProtKB" id="P19429"/>
    </source>
</evidence>
<evidence type="ECO:0000250" key="4">
    <source>
        <dbReference type="UniProtKB" id="P48787"/>
    </source>
</evidence>
<evidence type="ECO:0000256" key="5">
    <source>
        <dbReference type="SAM" id="MobiDB-lite"/>
    </source>
</evidence>
<evidence type="ECO:0000269" key="6">
    <source>
    </source>
</evidence>
<evidence type="ECO:0000269" key="7">
    <source>
    </source>
</evidence>
<evidence type="ECO:0000305" key="8"/>
<protein>
    <recommendedName>
        <fullName>Troponin I, cardiac muscle</fullName>
    </recommendedName>
    <alternativeName>
        <fullName>Cardiac troponin I</fullName>
    </alternativeName>
</protein>
<name>TNNI3_BOVIN</name>
<reference key="1">
    <citation type="submission" date="2004-09" db="EMBL/GenBank/DDBJ databases">
        <title>Bovine dilated cardiomyopathy: evidence for a major gene on BTA18.</title>
        <authorList>
            <person name="Guziewicz K."/>
        </authorList>
    </citation>
    <scope>NUCLEOTIDE SEQUENCE [GENOMIC DNA]</scope>
    <source>
        <tissue>Peripheral blood</tissue>
    </source>
</reference>
<reference key="2">
    <citation type="journal article" date="1988" name="Biochemistry">
        <title>Amino acid sequence of bovine cardiac troponin I.</title>
        <authorList>
            <person name="Leszyk J."/>
            <person name="Dumaswala R."/>
            <person name="Potter J.D."/>
            <person name="Collins J.H."/>
        </authorList>
    </citation>
    <scope>PROTEIN SEQUENCE OF 2-212</scope>
    <scope>ACETYLATION AT ALA-2</scope>
</reference>
<reference key="3">
    <citation type="journal article" date="1988" name="Biochem. Biophys. Res. Commun.">
        <title>Pattern of repeating aromatic residues in synexin. Similarity to the cytoplasmic domain of synaptophysin.</title>
        <authorList>
            <person name="Creutz C.E."/>
            <person name="Snyder S.L."/>
            <person name="Husted L.D."/>
            <person name="Beggerly L.K."/>
            <person name="Fox J.W."/>
        </authorList>
    </citation>
    <scope>PROTEIN SEQUENCE OF 2-212</scope>
</reference>
<dbReference type="EMBL" id="AJ842179">
    <property type="protein sequence ID" value="CAH57016.1"/>
    <property type="molecule type" value="Genomic_DNA"/>
</dbReference>
<dbReference type="PIR" id="A29994">
    <property type="entry name" value="A29994"/>
</dbReference>
<dbReference type="RefSeq" id="NP_001035607.1">
    <property type="nucleotide sequence ID" value="NM_001040517.1"/>
</dbReference>
<dbReference type="BMRB" id="P08057"/>
<dbReference type="SMR" id="P08057"/>
<dbReference type="FunCoup" id="P08057">
    <property type="interactions" value="114"/>
</dbReference>
<dbReference type="IntAct" id="P08057">
    <property type="interactions" value="1"/>
</dbReference>
<dbReference type="iPTMnet" id="P08057"/>
<dbReference type="PaxDb" id="9913-ENSBTAP00000008425"/>
<dbReference type="GeneID" id="511094"/>
<dbReference type="KEGG" id="bta:511094"/>
<dbReference type="CTD" id="7137"/>
<dbReference type="eggNOG" id="KOG3977">
    <property type="taxonomic scope" value="Eukaryota"/>
</dbReference>
<dbReference type="HOGENOM" id="CLU_098686_1_0_1"/>
<dbReference type="InParanoid" id="P08057"/>
<dbReference type="OrthoDB" id="371899at2759"/>
<dbReference type="TreeFam" id="TF313374"/>
<dbReference type="Proteomes" id="UP000009136">
    <property type="component" value="Unplaced"/>
</dbReference>
<dbReference type="GO" id="GO:0097512">
    <property type="term" value="C:cardiac myofibril"/>
    <property type="evidence" value="ECO:0000314"/>
    <property type="project" value="CAFA"/>
</dbReference>
<dbReference type="GO" id="GO:1990584">
    <property type="term" value="C:cardiac Troponin complex"/>
    <property type="evidence" value="ECO:0000314"/>
    <property type="project" value="CAFA"/>
</dbReference>
<dbReference type="GO" id="GO:0005861">
    <property type="term" value="C:troponin complex"/>
    <property type="evidence" value="ECO:0000318"/>
    <property type="project" value="GO_Central"/>
</dbReference>
<dbReference type="GO" id="GO:0003779">
    <property type="term" value="F:actin binding"/>
    <property type="evidence" value="ECO:0007669"/>
    <property type="project" value="UniProtKB-KW"/>
</dbReference>
<dbReference type="GO" id="GO:0005524">
    <property type="term" value="F:ATP binding"/>
    <property type="evidence" value="ECO:0000314"/>
    <property type="project" value="CAFA"/>
</dbReference>
<dbReference type="GO" id="GO:0042030">
    <property type="term" value="F:ATPase inhibitor activity"/>
    <property type="evidence" value="ECO:0000314"/>
    <property type="project" value="CAFA"/>
</dbReference>
<dbReference type="GO" id="GO:0000287">
    <property type="term" value="F:magnesium ion binding"/>
    <property type="evidence" value="ECO:0000314"/>
    <property type="project" value="CAFA"/>
</dbReference>
<dbReference type="GO" id="GO:0030172">
    <property type="term" value="F:troponin C binding"/>
    <property type="evidence" value="ECO:0000353"/>
    <property type="project" value="CAFA"/>
</dbReference>
<dbReference type="GO" id="GO:0060048">
    <property type="term" value="P:cardiac muscle contraction"/>
    <property type="evidence" value="ECO:0000318"/>
    <property type="project" value="GO_Central"/>
</dbReference>
<dbReference type="GO" id="GO:0003009">
    <property type="term" value="P:skeletal muscle contraction"/>
    <property type="evidence" value="ECO:0000318"/>
    <property type="project" value="GO_Central"/>
</dbReference>
<dbReference type="FunFam" id="1.20.5.350:FF:000002">
    <property type="entry name" value="troponin I, fast skeletal muscle"/>
    <property type="match status" value="1"/>
</dbReference>
<dbReference type="Gene3D" id="1.20.5.350">
    <property type="match status" value="1"/>
</dbReference>
<dbReference type="Gene3D" id="6.10.250.180">
    <property type="match status" value="1"/>
</dbReference>
<dbReference type="InterPro" id="IPR001978">
    <property type="entry name" value="Troponin"/>
</dbReference>
<dbReference type="InterPro" id="IPR021666">
    <property type="entry name" value="Troponin-I_N"/>
</dbReference>
<dbReference type="InterPro" id="IPR050875">
    <property type="entry name" value="Troponin_I"/>
</dbReference>
<dbReference type="InterPro" id="IPR038077">
    <property type="entry name" value="Troponin_sf"/>
</dbReference>
<dbReference type="PANTHER" id="PTHR13738">
    <property type="entry name" value="TROPONIN I"/>
    <property type="match status" value="1"/>
</dbReference>
<dbReference type="PANTHER" id="PTHR13738:SF2">
    <property type="entry name" value="TROPONIN I, CARDIAC MUSCLE"/>
    <property type="match status" value="1"/>
</dbReference>
<dbReference type="Pfam" id="PF00992">
    <property type="entry name" value="Troponin"/>
    <property type="match status" value="1"/>
</dbReference>
<dbReference type="Pfam" id="PF11636">
    <property type="entry name" value="Troponin-I_N"/>
    <property type="match status" value="1"/>
</dbReference>
<dbReference type="SUPFAM" id="SSF90250">
    <property type="entry name" value="Troponin coil-coiled subunits"/>
    <property type="match status" value="1"/>
</dbReference>
<gene>
    <name type="primary">TNNI3</name>
</gene>
<keyword id="KW-0007">Acetylation</keyword>
<keyword id="KW-0009">Actin-binding</keyword>
<keyword id="KW-0903">Direct protein sequencing</keyword>
<keyword id="KW-0514">Muscle protein</keyword>
<keyword id="KW-0597">Phosphoprotein</keyword>
<keyword id="KW-1185">Reference proteome</keyword>
<organism>
    <name type="scientific">Bos taurus</name>
    <name type="common">Bovine</name>
    <dbReference type="NCBI Taxonomy" id="9913"/>
    <lineage>
        <taxon>Eukaryota</taxon>
        <taxon>Metazoa</taxon>
        <taxon>Chordata</taxon>
        <taxon>Craniata</taxon>
        <taxon>Vertebrata</taxon>
        <taxon>Euteleostomi</taxon>
        <taxon>Mammalia</taxon>
        <taxon>Eutheria</taxon>
        <taxon>Laurasiatheria</taxon>
        <taxon>Artiodactyla</taxon>
        <taxon>Ruminantia</taxon>
        <taxon>Pecora</taxon>
        <taxon>Bovidae</taxon>
        <taxon>Bovinae</taxon>
        <taxon>Bos</taxon>
    </lineage>
</organism>
<comment type="function">
    <text>Troponin I is the inhibitory subunit of troponin, the thin filament regulatory complex which confers calcium-sensitivity to striated muscle actomyosin ATPase activity.</text>
</comment>
<comment type="subunit">
    <text evidence="1">Interacts with TRIM63 (By similarity). Binds to actin and tropomyosin. Interacts with STK4/MST1 (By similarity).</text>
</comment>
<comment type="PTM">
    <text evidence="1">Phosphorylated at Ser-24 and Ser-25 by PRKD1; phosphorylation reduces myofilament calcium sensitivity. Phosphorylated preferentially at Thr-33. Phosphorylation by STK4/MST1 alters its binding affinity to TNNC1 (cardiac Tn-C) and TNNT2 (cardiac Tn-T). Phosphorylated at Ser-44 and Ser-46 by PRKCE; phosphorylation increases myocardium contractile dysfunction (By similarity).</text>
</comment>
<comment type="similarity">
    <text evidence="8">Belongs to the troponin I family.</text>
</comment>